<gene>
    <name type="primary">NFYB</name>
</gene>
<name>NFYB_PETMA</name>
<keyword id="KW-0010">Activator</keyword>
<keyword id="KW-0238">DNA-binding</keyword>
<keyword id="KW-0539">Nucleus</keyword>
<keyword id="KW-0804">Transcription</keyword>
<keyword id="KW-0805">Transcription regulation</keyword>
<organism>
    <name type="scientific">Petromyzon marinus</name>
    <name type="common">Sea lamprey</name>
    <dbReference type="NCBI Taxonomy" id="7757"/>
    <lineage>
        <taxon>Eukaryota</taxon>
        <taxon>Metazoa</taxon>
        <taxon>Chordata</taxon>
        <taxon>Craniata</taxon>
        <taxon>Vertebrata</taxon>
        <taxon>Cyclostomata</taxon>
        <taxon>Hyperoartia</taxon>
        <taxon>Petromyzontiformes</taxon>
        <taxon>Petromyzontidae</taxon>
        <taxon>Petromyzon</taxon>
    </lineage>
</organism>
<feature type="chain" id="PRO_0000204613" description="Nuclear transcription factor Y subunit beta">
    <location>
        <begin position="1"/>
        <end position="209"/>
    </location>
</feature>
<feature type="DNA-binding region" evidence="1">
    <location>
        <begin position="60"/>
        <end position="66"/>
    </location>
</feature>
<feature type="region of interest" description="A domain">
    <location>
        <begin position="1"/>
        <end position="53"/>
    </location>
</feature>
<feature type="region of interest" description="Disordered" evidence="2">
    <location>
        <begin position="31"/>
        <end position="52"/>
    </location>
</feature>
<feature type="region of interest" description="B domain">
    <location>
        <begin position="54"/>
        <end position="143"/>
    </location>
</feature>
<feature type="region of interest" description="Subunit association domain (SAD)" evidence="1">
    <location>
        <begin position="87"/>
        <end position="98"/>
    </location>
</feature>
<feature type="region of interest" description="C domain">
    <location>
        <begin position="144"/>
        <end position="209"/>
    </location>
</feature>
<feature type="compositionally biased region" description="Basic and acidic residues" evidence="2">
    <location>
        <begin position="41"/>
        <end position="52"/>
    </location>
</feature>
<evidence type="ECO:0000250" key="1"/>
<evidence type="ECO:0000256" key="2">
    <source>
        <dbReference type="SAM" id="MobiDB-lite"/>
    </source>
</evidence>
<evidence type="ECO:0000305" key="3"/>
<sequence length="209" mass="22676">MDADGSTTDASQLGITGDYIGGGHYVLQSSDGDAEGSLASGDHDESCGSKDPYREQDIYLPIANVARIMKTSIPSSGKIAKDAKECVQECVSEFISFITSEASERCHQEKRKTINGEDILFAMSTLGFDSYVEPLKQYLQKYRESMKGEKGINATVVTTTDAIPEELTEESFSGPLATSIITADGQQQNVMVYTTAYQQIPGVQPIQFT</sequence>
<comment type="function">
    <text>Component of the sequence-specific heterotrimeric transcription factor (NF-Y) which specifically recognizes a 5'-CCAAT-3' box motif found in the promoters of its target genes. NF-Y can function as both an activator and a repressor, depending on its interacting cofactors.</text>
</comment>
<comment type="subunit">
    <text evidence="1">Heterotrimeric transcription factor composed of three components, NF-YA, NF-YB and NF-YC. NF-YB and NF-YC must interact and dimerize for NF-YA association and DNA binding (By similarity).</text>
</comment>
<comment type="subcellular location">
    <subcellularLocation>
        <location>Nucleus</location>
    </subcellularLocation>
</comment>
<comment type="domain">
    <text>Can be divided into 3 domains: the weakly conserved A domain, the highly conserved B domain thought to be involved in subunit interaction and DNA binding, and the Glu-rich C domain.</text>
</comment>
<comment type="similarity">
    <text evidence="3">Belongs to the NFYB/HAP3 subunit family.</text>
</comment>
<proteinExistence type="evidence at transcript level"/>
<accession>P25210</accession>
<reference key="1">
    <citation type="journal article" date="1992" name="Nucleic Acids Res.">
        <title>Evolutionary variation of the CCAAT-binding transcription factor NF-Y.</title>
        <authorList>
            <person name="Li X.-Y."/>
            <person name="Mantovani R."/>
            <person name="Hooft van Huijsduijnen R."/>
            <person name="Andre I."/>
            <person name="Benoist C."/>
            <person name="Mathis D."/>
        </authorList>
    </citation>
    <scope>NUCLEOTIDE SEQUENCE [MRNA]</scope>
</reference>
<protein>
    <recommendedName>
        <fullName>Nuclear transcription factor Y subunit beta</fullName>
    </recommendedName>
    <alternativeName>
        <fullName>CAAT box DNA-binding protein subunit B</fullName>
    </alternativeName>
    <alternativeName>
        <fullName>Nuclear transcription factor Y subunit B</fullName>
        <shortName>NF-YB</shortName>
    </alternativeName>
</protein>
<dbReference type="EMBL" id="X59712">
    <property type="protein sequence ID" value="CAA42232.1"/>
    <property type="molecule type" value="mRNA"/>
</dbReference>
<dbReference type="PIR" id="S22818">
    <property type="entry name" value="S22818"/>
</dbReference>
<dbReference type="RefSeq" id="XP_032810272.1">
    <property type="nucleotide sequence ID" value="XM_032954381.1"/>
</dbReference>
<dbReference type="SMR" id="P25210"/>
<dbReference type="STRING" id="7757.ENSPMAP00000001363"/>
<dbReference type="Ensembl" id="ENSPMAT00000001369.1">
    <property type="protein sequence ID" value="ENSPMAP00000001363.1"/>
    <property type="gene ID" value="ENSPMAG00000001234.1"/>
</dbReference>
<dbReference type="GeneID" id="116942445"/>
<dbReference type="GeneTree" id="ENSGT00940000154917"/>
<dbReference type="HOGENOM" id="CLU_066247_9_2_1"/>
<dbReference type="OMA" id="NATHGDS"/>
<dbReference type="OrthoDB" id="386949at2759"/>
<dbReference type="TreeFam" id="TF314521"/>
<dbReference type="Proteomes" id="UP001318040">
    <property type="component" value="Chromosome 14"/>
</dbReference>
<dbReference type="GO" id="GO:0016602">
    <property type="term" value="C:CCAAT-binding factor complex"/>
    <property type="evidence" value="ECO:0007669"/>
    <property type="project" value="InterPro"/>
</dbReference>
<dbReference type="GO" id="GO:0001228">
    <property type="term" value="F:DNA-binding transcription activator activity, RNA polymerase II-specific"/>
    <property type="evidence" value="ECO:0007669"/>
    <property type="project" value="InterPro"/>
</dbReference>
<dbReference type="GO" id="GO:0046982">
    <property type="term" value="F:protein heterodimerization activity"/>
    <property type="evidence" value="ECO:0007669"/>
    <property type="project" value="InterPro"/>
</dbReference>
<dbReference type="GO" id="GO:0000978">
    <property type="term" value="F:RNA polymerase II cis-regulatory region sequence-specific DNA binding"/>
    <property type="evidence" value="ECO:0007669"/>
    <property type="project" value="TreeGrafter"/>
</dbReference>
<dbReference type="CDD" id="cd22907">
    <property type="entry name" value="HFD_NFYB"/>
    <property type="match status" value="1"/>
</dbReference>
<dbReference type="FunFam" id="1.10.20.10:FF:000027">
    <property type="entry name" value="Nuclear transcription factor Y subunit beta"/>
    <property type="match status" value="1"/>
</dbReference>
<dbReference type="Gene3D" id="1.10.20.10">
    <property type="entry name" value="Histone, subunit A"/>
    <property type="match status" value="1"/>
</dbReference>
<dbReference type="InterPro" id="IPR003958">
    <property type="entry name" value="CBFA_NFYB_domain"/>
</dbReference>
<dbReference type="InterPro" id="IPR009072">
    <property type="entry name" value="Histone-fold"/>
</dbReference>
<dbReference type="InterPro" id="IPR027113">
    <property type="entry name" value="Transc_fact_NFYB/HAP3"/>
</dbReference>
<dbReference type="InterPro" id="IPR003956">
    <property type="entry name" value="Transcrpt_fac_NFYB/HAP3_CS"/>
</dbReference>
<dbReference type="PANTHER" id="PTHR11064">
    <property type="entry name" value="CCAAT-BINDING TRANSCRIPTION FACTOR-RELATED"/>
    <property type="match status" value="1"/>
</dbReference>
<dbReference type="PANTHER" id="PTHR11064:SF9">
    <property type="entry name" value="NUCLEAR TRANSCRIPTION FACTOR Y SUBUNIT BETA"/>
    <property type="match status" value="1"/>
</dbReference>
<dbReference type="Pfam" id="PF00808">
    <property type="entry name" value="CBFD_NFYB_HMF"/>
    <property type="match status" value="1"/>
</dbReference>
<dbReference type="PRINTS" id="PR00615">
    <property type="entry name" value="CCAATSUBUNTA"/>
</dbReference>
<dbReference type="SUPFAM" id="SSF47113">
    <property type="entry name" value="Histone-fold"/>
    <property type="match status" value="1"/>
</dbReference>
<dbReference type="PROSITE" id="PS00685">
    <property type="entry name" value="NFYB_HAP3"/>
    <property type="match status" value="1"/>
</dbReference>